<name>CHEB_SYMTH</name>
<sequence length="362" mass="38488">MSDRVQRPIRVLVVDDSAFMRKVLTELLESDPLITVVGTARDGQDGLEKVLQLQPDVVTLDIEMPRLDGYGTLREIMARRPTPVVMVSSHTREGAEATIRALALGAVDFVAKPSGSISLNMHVARDELVAKVKAAAAATPRVRTAAVELAPVSPREKMQALAGLRRQTGFGDRLPRRLVLIGCSTGGPGALHQIIPRLPADLPAGVLVVQHMPPGFTRSLAQRLDELSAISVREARAGDPVRAGQVLVAPGGYHMLVDAEGRIALDQGPPVHGVRPAVDVTFESVLPVWKERLVGVILTGMGYDGAKGMAQLRKAGGWTIAEDASTCVVYGMPRVVVELGAAREVLPVHSIADAITRAVGEG</sequence>
<dbReference type="EC" id="3.1.1.61" evidence="1"/>
<dbReference type="EC" id="3.5.1.44" evidence="1"/>
<dbReference type="EMBL" id="AP006840">
    <property type="protein sequence ID" value="BAD40526.1"/>
    <property type="molecule type" value="Genomic_DNA"/>
</dbReference>
<dbReference type="RefSeq" id="WP_011195671.1">
    <property type="nucleotide sequence ID" value="NC_006177.1"/>
</dbReference>
<dbReference type="SMR" id="Q67P67"/>
<dbReference type="STRING" id="292459.STH1541"/>
<dbReference type="KEGG" id="sth:STH1541"/>
<dbReference type="eggNOG" id="COG2201">
    <property type="taxonomic scope" value="Bacteria"/>
</dbReference>
<dbReference type="HOGENOM" id="CLU_000445_51_0_9"/>
<dbReference type="OrthoDB" id="9793421at2"/>
<dbReference type="Proteomes" id="UP000000417">
    <property type="component" value="Chromosome"/>
</dbReference>
<dbReference type="GO" id="GO:0005737">
    <property type="term" value="C:cytoplasm"/>
    <property type="evidence" value="ECO:0007669"/>
    <property type="project" value="UniProtKB-SubCell"/>
</dbReference>
<dbReference type="GO" id="GO:0000156">
    <property type="term" value="F:phosphorelay response regulator activity"/>
    <property type="evidence" value="ECO:0007669"/>
    <property type="project" value="InterPro"/>
</dbReference>
<dbReference type="GO" id="GO:0008984">
    <property type="term" value="F:protein-glutamate methylesterase activity"/>
    <property type="evidence" value="ECO:0007669"/>
    <property type="project" value="UniProtKB-UniRule"/>
</dbReference>
<dbReference type="GO" id="GO:0050568">
    <property type="term" value="F:protein-glutamine glutaminase activity"/>
    <property type="evidence" value="ECO:0007669"/>
    <property type="project" value="UniProtKB-UniRule"/>
</dbReference>
<dbReference type="GO" id="GO:0006935">
    <property type="term" value="P:chemotaxis"/>
    <property type="evidence" value="ECO:0007669"/>
    <property type="project" value="UniProtKB-UniRule"/>
</dbReference>
<dbReference type="CDD" id="cd16432">
    <property type="entry name" value="CheB_Rec"/>
    <property type="match status" value="1"/>
</dbReference>
<dbReference type="CDD" id="cd17541">
    <property type="entry name" value="REC_CheB-like"/>
    <property type="match status" value="1"/>
</dbReference>
<dbReference type="Gene3D" id="3.40.50.2300">
    <property type="match status" value="1"/>
</dbReference>
<dbReference type="Gene3D" id="3.40.50.180">
    <property type="entry name" value="Methylesterase CheB, C-terminal domain"/>
    <property type="match status" value="1"/>
</dbReference>
<dbReference type="HAMAP" id="MF_00099">
    <property type="entry name" value="CheB_chemtxs"/>
    <property type="match status" value="1"/>
</dbReference>
<dbReference type="InterPro" id="IPR008248">
    <property type="entry name" value="CheB-like"/>
</dbReference>
<dbReference type="InterPro" id="IPR035909">
    <property type="entry name" value="CheB_C"/>
</dbReference>
<dbReference type="InterPro" id="IPR011006">
    <property type="entry name" value="CheY-like_superfamily"/>
</dbReference>
<dbReference type="InterPro" id="IPR000673">
    <property type="entry name" value="Sig_transdc_resp-reg_Me-estase"/>
</dbReference>
<dbReference type="InterPro" id="IPR001789">
    <property type="entry name" value="Sig_transdc_resp-reg_receiver"/>
</dbReference>
<dbReference type="NCBIfam" id="NF001965">
    <property type="entry name" value="PRK00742.1"/>
    <property type="match status" value="1"/>
</dbReference>
<dbReference type="NCBIfam" id="NF009206">
    <property type="entry name" value="PRK12555.1"/>
    <property type="match status" value="1"/>
</dbReference>
<dbReference type="PANTHER" id="PTHR42872">
    <property type="entry name" value="PROTEIN-GLUTAMATE METHYLESTERASE/PROTEIN-GLUTAMINE GLUTAMINASE"/>
    <property type="match status" value="1"/>
</dbReference>
<dbReference type="PANTHER" id="PTHR42872:SF6">
    <property type="entry name" value="PROTEIN-GLUTAMATE METHYLESTERASE_PROTEIN-GLUTAMINE GLUTAMINASE"/>
    <property type="match status" value="1"/>
</dbReference>
<dbReference type="Pfam" id="PF01339">
    <property type="entry name" value="CheB_methylest"/>
    <property type="match status" value="1"/>
</dbReference>
<dbReference type="Pfam" id="PF00072">
    <property type="entry name" value="Response_reg"/>
    <property type="match status" value="1"/>
</dbReference>
<dbReference type="PIRSF" id="PIRSF000876">
    <property type="entry name" value="RR_chemtxs_CheB"/>
    <property type="match status" value="1"/>
</dbReference>
<dbReference type="SMART" id="SM00448">
    <property type="entry name" value="REC"/>
    <property type="match status" value="1"/>
</dbReference>
<dbReference type="SUPFAM" id="SSF52172">
    <property type="entry name" value="CheY-like"/>
    <property type="match status" value="1"/>
</dbReference>
<dbReference type="SUPFAM" id="SSF52738">
    <property type="entry name" value="Methylesterase CheB, C-terminal domain"/>
    <property type="match status" value="1"/>
</dbReference>
<dbReference type="PROSITE" id="PS50122">
    <property type="entry name" value="CHEB"/>
    <property type="match status" value="1"/>
</dbReference>
<dbReference type="PROSITE" id="PS50110">
    <property type="entry name" value="RESPONSE_REGULATORY"/>
    <property type="match status" value="1"/>
</dbReference>
<feature type="chain" id="PRO_0000225487" description="Protein-glutamate methylesterase/protein-glutamine glutaminase">
    <location>
        <begin position="1"/>
        <end position="362"/>
    </location>
</feature>
<feature type="domain" description="Response regulatory" evidence="1">
    <location>
        <begin position="10"/>
        <end position="127"/>
    </location>
</feature>
<feature type="domain" description="CheB-type methylesterase" evidence="1">
    <location>
        <begin position="173"/>
        <end position="362"/>
    </location>
</feature>
<feature type="active site" evidence="1">
    <location>
        <position position="184"/>
    </location>
</feature>
<feature type="active site" evidence="1">
    <location>
        <position position="211"/>
    </location>
</feature>
<feature type="active site" evidence="1">
    <location>
        <position position="304"/>
    </location>
</feature>
<feature type="modified residue" description="4-aspartylphosphate" evidence="1">
    <location>
        <position position="61"/>
    </location>
</feature>
<comment type="function">
    <text evidence="1">Involved in chemotaxis. Part of a chemotaxis signal transduction system that modulates chemotaxis in response to various stimuli. Catalyzes the demethylation of specific methylglutamate residues introduced into the chemoreceptors (methyl-accepting chemotaxis proteins or MCP) by CheR. Also mediates the irreversible deamidation of specific glutamine residues to glutamic acid.</text>
</comment>
<comment type="catalytic activity">
    <reaction evidence="1">
        <text>[protein]-L-glutamate 5-O-methyl ester + H2O = L-glutamyl-[protein] + methanol + H(+)</text>
        <dbReference type="Rhea" id="RHEA:23236"/>
        <dbReference type="Rhea" id="RHEA-COMP:10208"/>
        <dbReference type="Rhea" id="RHEA-COMP:10311"/>
        <dbReference type="ChEBI" id="CHEBI:15377"/>
        <dbReference type="ChEBI" id="CHEBI:15378"/>
        <dbReference type="ChEBI" id="CHEBI:17790"/>
        <dbReference type="ChEBI" id="CHEBI:29973"/>
        <dbReference type="ChEBI" id="CHEBI:82795"/>
        <dbReference type="EC" id="3.1.1.61"/>
    </reaction>
</comment>
<comment type="catalytic activity">
    <reaction evidence="1">
        <text>L-glutaminyl-[protein] + H2O = L-glutamyl-[protein] + NH4(+)</text>
        <dbReference type="Rhea" id="RHEA:16441"/>
        <dbReference type="Rhea" id="RHEA-COMP:10207"/>
        <dbReference type="Rhea" id="RHEA-COMP:10208"/>
        <dbReference type="ChEBI" id="CHEBI:15377"/>
        <dbReference type="ChEBI" id="CHEBI:28938"/>
        <dbReference type="ChEBI" id="CHEBI:29973"/>
        <dbReference type="ChEBI" id="CHEBI:30011"/>
        <dbReference type="EC" id="3.5.1.44"/>
    </reaction>
</comment>
<comment type="subcellular location">
    <subcellularLocation>
        <location evidence="1">Cytoplasm</location>
    </subcellularLocation>
</comment>
<comment type="domain">
    <text evidence="1">Contains a C-terminal catalytic domain, and an N-terminal region which modulates catalytic activity.</text>
</comment>
<comment type="PTM">
    <text evidence="1">Phosphorylated by CheA. Phosphorylation of the N-terminal regulatory domain activates the methylesterase activity.</text>
</comment>
<comment type="similarity">
    <text evidence="1">Belongs to the CheB family.</text>
</comment>
<organism>
    <name type="scientific">Symbiobacterium thermophilum (strain DSM 24528 / JCM 14929 / IAM 14863 / T)</name>
    <dbReference type="NCBI Taxonomy" id="292459"/>
    <lineage>
        <taxon>Bacteria</taxon>
        <taxon>Bacillati</taxon>
        <taxon>Bacillota</taxon>
        <taxon>Clostridia</taxon>
        <taxon>Eubacteriales</taxon>
        <taxon>Symbiobacteriaceae</taxon>
        <taxon>Symbiobacterium</taxon>
    </lineage>
</organism>
<protein>
    <recommendedName>
        <fullName evidence="1">Protein-glutamate methylesterase/protein-glutamine glutaminase</fullName>
        <ecNumber evidence="1">3.1.1.61</ecNumber>
        <ecNumber evidence="1">3.5.1.44</ecNumber>
    </recommendedName>
</protein>
<proteinExistence type="inferred from homology"/>
<gene>
    <name evidence="1" type="primary">cheB</name>
    <name type="ordered locus">STH1541</name>
</gene>
<keyword id="KW-0145">Chemotaxis</keyword>
<keyword id="KW-0963">Cytoplasm</keyword>
<keyword id="KW-0378">Hydrolase</keyword>
<keyword id="KW-0597">Phosphoprotein</keyword>
<keyword id="KW-1185">Reference proteome</keyword>
<evidence type="ECO:0000255" key="1">
    <source>
        <dbReference type="HAMAP-Rule" id="MF_00099"/>
    </source>
</evidence>
<reference key="1">
    <citation type="journal article" date="2004" name="Nucleic Acids Res.">
        <title>Genome sequence of Symbiobacterium thermophilum, an uncultivable bacterium that depends on microbial commensalism.</title>
        <authorList>
            <person name="Ueda K."/>
            <person name="Yamashita A."/>
            <person name="Ishikawa J."/>
            <person name="Shimada M."/>
            <person name="Watsuji T."/>
            <person name="Morimura K."/>
            <person name="Ikeda H."/>
            <person name="Hattori M."/>
            <person name="Beppu T."/>
        </authorList>
    </citation>
    <scope>NUCLEOTIDE SEQUENCE [LARGE SCALE GENOMIC DNA]</scope>
    <source>
        <strain>DSM 24528 / JCM 14929 / IAM 14863 / T</strain>
    </source>
</reference>
<accession>Q67P67</accession>